<name>AGALB_EMENI</name>
<keyword id="KW-1015">Disulfide bond</keyword>
<keyword id="KW-0325">Glycoprotein</keyword>
<keyword id="KW-0326">Glycosidase</keyword>
<keyword id="KW-0378">Hydrolase</keyword>
<keyword id="KW-1185">Reference proteome</keyword>
<keyword id="KW-0964">Secreted</keyword>
<keyword id="KW-0732">Signal</keyword>
<protein>
    <recommendedName>
        <fullName>Probable alpha-galactosidase B</fullName>
        <ecNumber>3.2.1.22</ecNumber>
    </recommendedName>
    <alternativeName>
        <fullName>Melibiase B</fullName>
    </alternativeName>
</protein>
<feature type="signal peptide" evidence="2">
    <location>
        <begin position="1"/>
        <end position="16"/>
    </location>
</feature>
<feature type="chain" id="PRO_0000393220" description="Probable alpha-galactosidase B">
    <location>
        <begin position="17"/>
        <end position="455"/>
    </location>
</feature>
<feature type="active site" description="Nucleophile" evidence="1">
    <location>
        <position position="149"/>
    </location>
</feature>
<feature type="active site" description="Proton donor" evidence="1">
    <location>
        <position position="244"/>
    </location>
</feature>
<feature type="binding site" evidence="1">
    <location>
        <begin position="222"/>
        <end position="226"/>
    </location>
    <ligand>
        <name>substrate</name>
    </ligand>
</feature>
<feature type="glycosylation site" description="N-linked (GlcNAc...) asparagine" evidence="2">
    <location>
        <position position="42"/>
    </location>
</feature>
<feature type="glycosylation site" description="N-linked (GlcNAc...) asparagine" evidence="2">
    <location>
        <position position="177"/>
    </location>
</feature>
<feature type="glycosylation site" description="N-linked (GlcNAc...) asparagine" evidence="2">
    <location>
        <position position="192"/>
    </location>
</feature>
<feature type="glycosylation site" description="N-linked (GlcNAc...) asparagine" evidence="2">
    <location>
        <position position="395"/>
    </location>
</feature>
<feature type="disulfide bond" evidence="1">
    <location>
        <begin position="39"/>
        <end position="71"/>
    </location>
</feature>
<feature type="disulfide bond" evidence="1">
    <location>
        <begin position="121"/>
        <end position="151"/>
    </location>
</feature>
<sequence>MIEFLALITLISRANALMRPDGVGRLPALGWSSWNAHECDINATVILTAAAQVVKLGLKDLGYEYINIDDCWSIKTHRDPTTNRMIPDADRFPDGIASVASQIHELGLKVGIYSSAGETTCAGYPASLGYEDIDAETFAEWEIDYLKYDDCGVPDNWKDPYTFCVPDTANNAGPFPNGTCPSLPNPAPANYNWSTSPSAERFRRMLDALNTQDRTILYSLCNWGNAAVNTWGAEIGNSWRMSGDISPGRGEVGPDRTRIAVWERIAEITNEMSFLVREYAEFWGWPDADMLEVGNGEGGMTVAENRAHFALWAAMRSPLLIGTKLDTIRQEHLKILKNPTLLTFHQDPIINRPAYPYKWGYNADYTFDAAHPAEYWSGPSPALEGTLVVMLNSENVTSTRMAVWSEVPELQNQDQGDAFEVMDGWTGEDLGCIKEKYEVELDAHDAAVLVVGNAC</sequence>
<evidence type="ECO:0000250" key="1"/>
<evidence type="ECO:0000255" key="2"/>
<evidence type="ECO:0000305" key="3"/>
<dbReference type="EC" id="3.2.1.22"/>
<dbReference type="EMBL" id="DQ490512">
    <property type="protein sequence ID" value="ABF50888.1"/>
    <property type="molecule type" value="mRNA"/>
</dbReference>
<dbReference type="EMBL" id="AACD01000130">
    <property type="protein sequence ID" value="EAA61810.1"/>
    <property type="status" value="ALT_SEQ"/>
    <property type="molecule type" value="Genomic_DNA"/>
</dbReference>
<dbReference type="EMBL" id="BN001304">
    <property type="protein sequence ID" value="CBF79768.1"/>
    <property type="status" value="ALT_SEQ"/>
    <property type="molecule type" value="Genomic_DNA"/>
</dbReference>
<dbReference type="RefSeq" id="XP_680893.1">
    <property type="nucleotide sequence ID" value="XM_675801.1"/>
</dbReference>
<dbReference type="SMR" id="Q5AVQ6"/>
<dbReference type="STRING" id="227321.Q5AVQ6"/>
<dbReference type="CAZy" id="GH27">
    <property type="family name" value="Glycoside Hydrolase Family 27"/>
</dbReference>
<dbReference type="GlyCosmos" id="Q5AVQ6">
    <property type="glycosylation" value="4 sites, No reported glycans"/>
</dbReference>
<dbReference type="KEGG" id="ani:ANIA_07624"/>
<dbReference type="VEuPathDB" id="FungiDB:AN7624"/>
<dbReference type="eggNOG" id="KOG2366">
    <property type="taxonomic scope" value="Eukaryota"/>
</dbReference>
<dbReference type="HOGENOM" id="CLU_013093_2_2_1"/>
<dbReference type="InParanoid" id="Q5AVQ6"/>
<dbReference type="OrthoDB" id="5795902at2759"/>
<dbReference type="Proteomes" id="UP000000560">
    <property type="component" value="Chromosome IV"/>
</dbReference>
<dbReference type="GO" id="GO:0005576">
    <property type="term" value="C:extracellular region"/>
    <property type="evidence" value="ECO:0007669"/>
    <property type="project" value="UniProtKB-SubCell"/>
</dbReference>
<dbReference type="GO" id="GO:0004557">
    <property type="term" value="F:alpha-galactosidase activity"/>
    <property type="evidence" value="ECO:0007669"/>
    <property type="project" value="UniProtKB-EC"/>
</dbReference>
<dbReference type="GO" id="GO:0005975">
    <property type="term" value="P:carbohydrate metabolic process"/>
    <property type="evidence" value="ECO:0007669"/>
    <property type="project" value="InterPro"/>
</dbReference>
<dbReference type="CDD" id="cd14792">
    <property type="entry name" value="GH27"/>
    <property type="match status" value="1"/>
</dbReference>
<dbReference type="FunFam" id="2.60.40.1180:FF:000049">
    <property type="entry name" value="Alpha-galactosidase"/>
    <property type="match status" value="1"/>
</dbReference>
<dbReference type="Gene3D" id="3.20.20.70">
    <property type="entry name" value="Aldolase class I"/>
    <property type="match status" value="1"/>
</dbReference>
<dbReference type="Gene3D" id="2.60.40.1180">
    <property type="entry name" value="Golgi alpha-mannosidase II"/>
    <property type="match status" value="1"/>
</dbReference>
<dbReference type="InterPro" id="IPR013785">
    <property type="entry name" value="Aldolase_TIM"/>
</dbReference>
<dbReference type="InterPro" id="IPR002241">
    <property type="entry name" value="Glyco_hydro_27"/>
</dbReference>
<dbReference type="InterPro" id="IPR000111">
    <property type="entry name" value="Glyco_hydro_27/36_CS"/>
</dbReference>
<dbReference type="InterPro" id="IPR013780">
    <property type="entry name" value="Glyco_hydro_b"/>
</dbReference>
<dbReference type="InterPro" id="IPR017853">
    <property type="entry name" value="Glycoside_hydrolase_SF"/>
</dbReference>
<dbReference type="InterPro" id="IPR041233">
    <property type="entry name" value="Melibiase_C"/>
</dbReference>
<dbReference type="PANTHER" id="PTHR11452:SF61">
    <property type="entry name" value="ALPHA-GALACTOSIDASE B-RELATED"/>
    <property type="match status" value="1"/>
</dbReference>
<dbReference type="PANTHER" id="PTHR11452">
    <property type="entry name" value="ALPHA-GALACTOSIDASE/ALPHA-N-ACETYLGALACTOSAMINIDASE"/>
    <property type="match status" value="1"/>
</dbReference>
<dbReference type="Pfam" id="PF16499">
    <property type="entry name" value="Melibiase_2"/>
    <property type="match status" value="2"/>
</dbReference>
<dbReference type="Pfam" id="PF17801">
    <property type="entry name" value="Melibiase_C"/>
    <property type="match status" value="1"/>
</dbReference>
<dbReference type="PRINTS" id="PR00740">
    <property type="entry name" value="GLHYDRLASE27"/>
</dbReference>
<dbReference type="SUPFAM" id="SSF51445">
    <property type="entry name" value="(Trans)glycosidases"/>
    <property type="match status" value="1"/>
</dbReference>
<dbReference type="SUPFAM" id="SSF51011">
    <property type="entry name" value="Glycosyl hydrolase domain"/>
    <property type="match status" value="1"/>
</dbReference>
<dbReference type="PROSITE" id="PS00512">
    <property type="entry name" value="ALPHA_GALACTOSIDASE"/>
    <property type="match status" value="1"/>
</dbReference>
<organism>
    <name type="scientific">Emericella nidulans (strain FGSC A4 / ATCC 38163 / CBS 112.46 / NRRL 194 / M139)</name>
    <name type="common">Aspergillus nidulans</name>
    <dbReference type="NCBI Taxonomy" id="227321"/>
    <lineage>
        <taxon>Eukaryota</taxon>
        <taxon>Fungi</taxon>
        <taxon>Dikarya</taxon>
        <taxon>Ascomycota</taxon>
        <taxon>Pezizomycotina</taxon>
        <taxon>Eurotiomycetes</taxon>
        <taxon>Eurotiomycetidae</taxon>
        <taxon>Eurotiales</taxon>
        <taxon>Aspergillaceae</taxon>
        <taxon>Aspergillus</taxon>
        <taxon>Aspergillus subgen. Nidulantes</taxon>
    </lineage>
</organism>
<reference key="1">
    <citation type="journal article" date="2006" name="Proc. Natl. Acad. Sci. U.S.A.">
        <title>Development and application of a suite of polysaccharide-degrading enzymes for analyzing plant cell walls.</title>
        <authorList>
            <person name="Bauer S."/>
            <person name="Vasu P."/>
            <person name="Persson S."/>
            <person name="Mort A.J."/>
            <person name="Somerville C.R."/>
        </authorList>
    </citation>
    <scope>NUCLEOTIDE SEQUENCE [MRNA]</scope>
    <source>
        <strain>FGSC A4 / ATCC 38163 / CBS 112.46 / NRRL 194 / M139</strain>
    </source>
</reference>
<reference key="2">
    <citation type="journal article" date="2005" name="Nature">
        <title>Sequencing of Aspergillus nidulans and comparative analysis with A. fumigatus and A. oryzae.</title>
        <authorList>
            <person name="Galagan J.E."/>
            <person name="Calvo S.E."/>
            <person name="Cuomo C."/>
            <person name="Ma L.-J."/>
            <person name="Wortman J.R."/>
            <person name="Batzoglou S."/>
            <person name="Lee S.-I."/>
            <person name="Bastuerkmen M."/>
            <person name="Spevak C.C."/>
            <person name="Clutterbuck J."/>
            <person name="Kapitonov V."/>
            <person name="Jurka J."/>
            <person name="Scazzocchio C."/>
            <person name="Farman M.L."/>
            <person name="Butler J."/>
            <person name="Purcell S."/>
            <person name="Harris S."/>
            <person name="Braus G.H."/>
            <person name="Draht O."/>
            <person name="Busch S."/>
            <person name="D'Enfert C."/>
            <person name="Bouchier C."/>
            <person name="Goldman G.H."/>
            <person name="Bell-Pedersen D."/>
            <person name="Griffiths-Jones S."/>
            <person name="Doonan J.H."/>
            <person name="Yu J."/>
            <person name="Vienken K."/>
            <person name="Pain A."/>
            <person name="Freitag M."/>
            <person name="Selker E.U."/>
            <person name="Archer D.B."/>
            <person name="Penalva M.A."/>
            <person name="Oakley B.R."/>
            <person name="Momany M."/>
            <person name="Tanaka T."/>
            <person name="Kumagai T."/>
            <person name="Asai K."/>
            <person name="Machida M."/>
            <person name="Nierman W.C."/>
            <person name="Denning D.W."/>
            <person name="Caddick M.X."/>
            <person name="Hynes M."/>
            <person name="Paoletti M."/>
            <person name="Fischer R."/>
            <person name="Miller B.L."/>
            <person name="Dyer P.S."/>
            <person name="Sachs M.S."/>
            <person name="Osmani S.A."/>
            <person name="Birren B.W."/>
        </authorList>
    </citation>
    <scope>NUCLEOTIDE SEQUENCE [LARGE SCALE GENOMIC DNA]</scope>
    <source>
        <strain>FGSC A4 / ATCC 38163 / CBS 112.46 / NRRL 194 / M139</strain>
    </source>
</reference>
<reference key="3">
    <citation type="journal article" date="2009" name="Fungal Genet. Biol.">
        <title>The 2008 update of the Aspergillus nidulans genome annotation: a community effort.</title>
        <authorList>
            <person name="Wortman J.R."/>
            <person name="Gilsenan J.M."/>
            <person name="Joardar V."/>
            <person name="Deegan J."/>
            <person name="Clutterbuck J."/>
            <person name="Andersen M.R."/>
            <person name="Archer D."/>
            <person name="Bencina M."/>
            <person name="Braus G."/>
            <person name="Coutinho P."/>
            <person name="von Dohren H."/>
            <person name="Doonan J."/>
            <person name="Driessen A.J."/>
            <person name="Durek P."/>
            <person name="Espeso E."/>
            <person name="Fekete E."/>
            <person name="Flipphi M."/>
            <person name="Estrada C.G."/>
            <person name="Geysens S."/>
            <person name="Goldman G."/>
            <person name="de Groot P.W."/>
            <person name="Hansen K."/>
            <person name="Harris S.D."/>
            <person name="Heinekamp T."/>
            <person name="Helmstaedt K."/>
            <person name="Henrissat B."/>
            <person name="Hofmann G."/>
            <person name="Homan T."/>
            <person name="Horio T."/>
            <person name="Horiuchi H."/>
            <person name="James S."/>
            <person name="Jones M."/>
            <person name="Karaffa L."/>
            <person name="Karanyi Z."/>
            <person name="Kato M."/>
            <person name="Keller N."/>
            <person name="Kelly D.E."/>
            <person name="Kiel J.A."/>
            <person name="Kim J.M."/>
            <person name="van der Klei I.J."/>
            <person name="Klis F.M."/>
            <person name="Kovalchuk A."/>
            <person name="Krasevec N."/>
            <person name="Kubicek C.P."/>
            <person name="Liu B."/>
            <person name="Maccabe A."/>
            <person name="Meyer V."/>
            <person name="Mirabito P."/>
            <person name="Miskei M."/>
            <person name="Mos M."/>
            <person name="Mullins J."/>
            <person name="Nelson D.R."/>
            <person name="Nielsen J."/>
            <person name="Oakley B.R."/>
            <person name="Osmani S.A."/>
            <person name="Pakula T."/>
            <person name="Paszewski A."/>
            <person name="Paulsen I."/>
            <person name="Pilsyk S."/>
            <person name="Pocsi I."/>
            <person name="Punt P.J."/>
            <person name="Ram A.F."/>
            <person name="Ren Q."/>
            <person name="Robellet X."/>
            <person name="Robson G."/>
            <person name="Seiboth B."/>
            <person name="van Solingen P."/>
            <person name="Specht T."/>
            <person name="Sun J."/>
            <person name="Taheri-Talesh N."/>
            <person name="Takeshita N."/>
            <person name="Ussery D."/>
            <person name="vanKuyk P.A."/>
            <person name="Visser H."/>
            <person name="van de Vondervoort P.J."/>
            <person name="de Vries R.P."/>
            <person name="Walton J."/>
            <person name="Xiang X."/>
            <person name="Xiong Y."/>
            <person name="Zeng A.P."/>
            <person name="Brandt B.W."/>
            <person name="Cornell M.J."/>
            <person name="van den Hondel C.A."/>
            <person name="Visser J."/>
            <person name="Oliver S.G."/>
            <person name="Turner G."/>
        </authorList>
    </citation>
    <scope>GENOME REANNOTATION</scope>
    <source>
        <strain>FGSC A4 / ATCC 38163 / CBS 112.46 / NRRL 194 / M139</strain>
    </source>
</reference>
<accession>Q5AVQ6</accession>
<accession>C8VBX2</accession>
<accession>Q1HFR2</accession>
<gene>
    <name type="primary">aglB</name>
    <name type="ORF">AN7624</name>
</gene>
<comment type="function">
    <text evidence="1">Hydrolyzes a variety of simple alpha-D-galactoside as well as more complex molecules such as oligosaccharides and polysaccharides.</text>
</comment>
<comment type="catalytic activity">
    <reaction>
        <text>Hydrolysis of terminal, non-reducing alpha-D-galactose residues in alpha-D-galactosides, including galactose oligosaccharides, galactomannans and galactolipids.</text>
        <dbReference type="EC" id="3.2.1.22"/>
    </reaction>
</comment>
<comment type="subcellular location">
    <subcellularLocation>
        <location evidence="3">Secreted</location>
    </subcellularLocation>
</comment>
<comment type="similarity">
    <text evidence="3">Belongs to the glycosyl hydrolase 27 family.</text>
</comment>
<comment type="sequence caution" evidence="3">
    <conflict type="erroneous gene model prediction">
        <sequence resource="EMBL-CDS" id="CBF79768"/>
    </conflict>
</comment>
<comment type="sequence caution" evidence="3">
    <conflict type="erroneous gene model prediction">
        <sequence resource="EMBL-CDS" id="EAA61810"/>
    </conflict>
</comment>
<proteinExistence type="evidence at transcript level"/>